<organism>
    <name type="scientific">Haemophilus influenzae (strain 86-028NP)</name>
    <dbReference type="NCBI Taxonomy" id="281310"/>
    <lineage>
        <taxon>Bacteria</taxon>
        <taxon>Pseudomonadati</taxon>
        <taxon>Pseudomonadota</taxon>
        <taxon>Gammaproteobacteria</taxon>
        <taxon>Pasteurellales</taxon>
        <taxon>Pasteurellaceae</taxon>
        <taxon>Haemophilus</taxon>
    </lineage>
</organism>
<evidence type="ECO:0000255" key="1">
    <source>
        <dbReference type="HAMAP-Rule" id="MF_00254"/>
    </source>
</evidence>
<dbReference type="EC" id="6.1.1.14" evidence="1"/>
<dbReference type="EMBL" id="CP000057">
    <property type="protein sequence ID" value="AAX87966.1"/>
    <property type="molecule type" value="Genomic_DNA"/>
</dbReference>
<dbReference type="RefSeq" id="WP_005632923.1">
    <property type="nucleotide sequence ID" value="NC_007146.2"/>
</dbReference>
<dbReference type="SMR" id="Q4QLY1"/>
<dbReference type="GeneID" id="93219965"/>
<dbReference type="KEGG" id="hit:NTHI1098"/>
<dbReference type="HOGENOM" id="CLU_057066_1_0_6"/>
<dbReference type="Proteomes" id="UP000002525">
    <property type="component" value="Chromosome"/>
</dbReference>
<dbReference type="GO" id="GO:0005829">
    <property type="term" value="C:cytosol"/>
    <property type="evidence" value="ECO:0007669"/>
    <property type="project" value="TreeGrafter"/>
</dbReference>
<dbReference type="GO" id="GO:0005524">
    <property type="term" value="F:ATP binding"/>
    <property type="evidence" value="ECO:0007669"/>
    <property type="project" value="UniProtKB-UniRule"/>
</dbReference>
<dbReference type="GO" id="GO:0004820">
    <property type="term" value="F:glycine-tRNA ligase activity"/>
    <property type="evidence" value="ECO:0007669"/>
    <property type="project" value="UniProtKB-UniRule"/>
</dbReference>
<dbReference type="GO" id="GO:0006426">
    <property type="term" value="P:glycyl-tRNA aminoacylation"/>
    <property type="evidence" value="ECO:0007669"/>
    <property type="project" value="UniProtKB-UniRule"/>
</dbReference>
<dbReference type="CDD" id="cd00733">
    <property type="entry name" value="GlyRS_alpha_core"/>
    <property type="match status" value="1"/>
</dbReference>
<dbReference type="FunFam" id="1.20.58.180:FF:000001">
    <property type="entry name" value="Glycine--tRNA ligase alpha subunit"/>
    <property type="match status" value="1"/>
</dbReference>
<dbReference type="FunFam" id="3.30.930.10:FF:000006">
    <property type="entry name" value="Glycine--tRNA ligase alpha subunit"/>
    <property type="match status" value="1"/>
</dbReference>
<dbReference type="Gene3D" id="3.30.930.10">
    <property type="entry name" value="Bira Bifunctional Protein, Domain 2"/>
    <property type="match status" value="1"/>
</dbReference>
<dbReference type="Gene3D" id="1.20.58.180">
    <property type="entry name" value="Class II aaRS and biotin synthetases, domain 2"/>
    <property type="match status" value="1"/>
</dbReference>
<dbReference type="HAMAP" id="MF_00254">
    <property type="entry name" value="Gly_tRNA_synth_alpha"/>
    <property type="match status" value="1"/>
</dbReference>
<dbReference type="InterPro" id="IPR045864">
    <property type="entry name" value="aa-tRNA-synth_II/BPL/LPL"/>
</dbReference>
<dbReference type="InterPro" id="IPR006194">
    <property type="entry name" value="Gly-tRNA-synth_heterodimer"/>
</dbReference>
<dbReference type="InterPro" id="IPR002310">
    <property type="entry name" value="Gly-tRNA_ligase_asu"/>
</dbReference>
<dbReference type="NCBIfam" id="TIGR00388">
    <property type="entry name" value="glyQ"/>
    <property type="match status" value="1"/>
</dbReference>
<dbReference type="NCBIfam" id="NF006827">
    <property type="entry name" value="PRK09348.1"/>
    <property type="match status" value="1"/>
</dbReference>
<dbReference type="PANTHER" id="PTHR30075:SF2">
    <property type="entry name" value="GLYCINE--TRNA LIGASE, CHLOROPLASTIC_MITOCHONDRIAL 2"/>
    <property type="match status" value="1"/>
</dbReference>
<dbReference type="PANTHER" id="PTHR30075">
    <property type="entry name" value="GLYCYL-TRNA SYNTHETASE"/>
    <property type="match status" value="1"/>
</dbReference>
<dbReference type="Pfam" id="PF02091">
    <property type="entry name" value="tRNA-synt_2e"/>
    <property type="match status" value="1"/>
</dbReference>
<dbReference type="PRINTS" id="PR01044">
    <property type="entry name" value="TRNASYNTHGA"/>
</dbReference>
<dbReference type="SUPFAM" id="SSF55681">
    <property type="entry name" value="Class II aaRS and biotin synthetases"/>
    <property type="match status" value="1"/>
</dbReference>
<dbReference type="PROSITE" id="PS50861">
    <property type="entry name" value="AA_TRNA_LIGASE_II_GLYAB"/>
    <property type="match status" value="1"/>
</dbReference>
<reference key="1">
    <citation type="journal article" date="2005" name="J. Bacteriol.">
        <title>Genomic sequence of an otitis media isolate of nontypeable Haemophilus influenzae: comparative study with H. influenzae serotype d, strain KW20.</title>
        <authorList>
            <person name="Harrison A."/>
            <person name="Dyer D.W."/>
            <person name="Gillaspy A."/>
            <person name="Ray W.C."/>
            <person name="Mungur R."/>
            <person name="Carson M.B."/>
            <person name="Zhong H."/>
            <person name="Gipson J."/>
            <person name="Gipson M."/>
            <person name="Johnson L.S."/>
            <person name="Lewis L."/>
            <person name="Bakaletz L.O."/>
            <person name="Munson R.S. Jr."/>
        </authorList>
    </citation>
    <scope>NUCLEOTIDE SEQUENCE [LARGE SCALE GENOMIC DNA]</scope>
    <source>
        <strain>86-028NP</strain>
    </source>
</reference>
<sequence length="302" mass="34471">MSTKFNVKTFQGMILALQEYWANQGCTIVQPFDMEVGAGTSHPMTALRALGPEPMAFAYVQPSRRPTDGRYGENPNRLQHYYQFQVVIKPSPDNIQELYLGSLEMLGFDPTQNDIRFVEDNWENPTLGAWGLGWEVWLNGMEVTQFTYFQQVGGLECKPVTGEVTYGLERLAMYIQGVDSVYDLVWSDGPLGKTTYGDVFHQNEVEQSTYNFEHANTDFLFYCFDQYEKEAQELLALEKPLPLPAYERILKAAHSFNLLDARKAISVTERQRYILRIRALTKGVAEAYYASREALGFPGCKK</sequence>
<keyword id="KW-0030">Aminoacyl-tRNA synthetase</keyword>
<keyword id="KW-0067">ATP-binding</keyword>
<keyword id="KW-0963">Cytoplasm</keyword>
<keyword id="KW-0436">Ligase</keyword>
<keyword id="KW-0547">Nucleotide-binding</keyword>
<keyword id="KW-0648">Protein biosynthesis</keyword>
<name>SYGA_HAEI8</name>
<accession>Q4QLY1</accession>
<gene>
    <name evidence="1" type="primary">glyQ</name>
    <name type="ordered locus">NTHI1098</name>
</gene>
<comment type="catalytic activity">
    <reaction evidence="1">
        <text>tRNA(Gly) + glycine + ATP = glycyl-tRNA(Gly) + AMP + diphosphate</text>
        <dbReference type="Rhea" id="RHEA:16013"/>
        <dbReference type="Rhea" id="RHEA-COMP:9664"/>
        <dbReference type="Rhea" id="RHEA-COMP:9683"/>
        <dbReference type="ChEBI" id="CHEBI:30616"/>
        <dbReference type="ChEBI" id="CHEBI:33019"/>
        <dbReference type="ChEBI" id="CHEBI:57305"/>
        <dbReference type="ChEBI" id="CHEBI:78442"/>
        <dbReference type="ChEBI" id="CHEBI:78522"/>
        <dbReference type="ChEBI" id="CHEBI:456215"/>
        <dbReference type="EC" id="6.1.1.14"/>
    </reaction>
</comment>
<comment type="subunit">
    <text evidence="1">Tetramer of two alpha and two beta subunits.</text>
</comment>
<comment type="subcellular location">
    <subcellularLocation>
        <location evidence="1">Cytoplasm</location>
    </subcellularLocation>
</comment>
<comment type="similarity">
    <text evidence="1">Belongs to the class-II aminoacyl-tRNA synthetase family.</text>
</comment>
<feature type="chain" id="PRO_1000047427" description="Glycine--tRNA ligase alpha subunit">
    <location>
        <begin position="1"/>
        <end position="302"/>
    </location>
</feature>
<proteinExistence type="inferred from homology"/>
<protein>
    <recommendedName>
        <fullName evidence="1">Glycine--tRNA ligase alpha subunit</fullName>
        <ecNumber evidence="1">6.1.1.14</ecNumber>
    </recommendedName>
    <alternativeName>
        <fullName evidence="1">Glycyl-tRNA synthetase alpha subunit</fullName>
        <shortName evidence="1">GlyRS</shortName>
    </alternativeName>
</protein>